<dbReference type="EMBL" id="CP000554">
    <property type="protein sequence ID" value="ABM77233.1"/>
    <property type="molecule type" value="Genomic_DNA"/>
</dbReference>
<dbReference type="RefSeq" id="WP_011825157.1">
    <property type="nucleotide sequence ID" value="NC_008820.1"/>
</dbReference>
<dbReference type="SMR" id="A2C6X3"/>
<dbReference type="STRING" id="59922.P9303_04811"/>
<dbReference type="KEGG" id="pmf:P9303_04811"/>
<dbReference type="HOGENOM" id="CLU_079215_8_1_3"/>
<dbReference type="BioCyc" id="PMAR59922:G1G80-443-MONOMER"/>
<dbReference type="Proteomes" id="UP000002274">
    <property type="component" value="Chromosome"/>
</dbReference>
<dbReference type="GO" id="GO:0031676">
    <property type="term" value="C:plasma membrane-derived thylakoid membrane"/>
    <property type="evidence" value="ECO:0007669"/>
    <property type="project" value="UniProtKB-SubCell"/>
</dbReference>
<dbReference type="GO" id="GO:0045259">
    <property type="term" value="C:proton-transporting ATP synthase complex"/>
    <property type="evidence" value="ECO:0007669"/>
    <property type="project" value="UniProtKB-KW"/>
</dbReference>
<dbReference type="GO" id="GO:0046933">
    <property type="term" value="F:proton-transporting ATP synthase activity, rotational mechanism"/>
    <property type="evidence" value="ECO:0007669"/>
    <property type="project" value="UniProtKB-UniRule"/>
</dbReference>
<dbReference type="CDD" id="cd06503">
    <property type="entry name" value="ATP-synt_Fo_b"/>
    <property type="match status" value="1"/>
</dbReference>
<dbReference type="HAMAP" id="MF_01398">
    <property type="entry name" value="ATP_synth_b_bprime"/>
    <property type="match status" value="1"/>
</dbReference>
<dbReference type="InterPro" id="IPR002146">
    <property type="entry name" value="ATP_synth_b/b'su_bac/chlpt"/>
</dbReference>
<dbReference type="NCBIfam" id="NF005606">
    <property type="entry name" value="PRK07352.1"/>
    <property type="match status" value="1"/>
</dbReference>
<dbReference type="PANTHER" id="PTHR34264">
    <property type="entry name" value="ATP SYNTHASE SUBUNIT B, CHLOROPLASTIC"/>
    <property type="match status" value="1"/>
</dbReference>
<dbReference type="PANTHER" id="PTHR34264:SF3">
    <property type="entry name" value="ATP SYNTHASE SUBUNIT B, CHLOROPLASTIC"/>
    <property type="match status" value="1"/>
</dbReference>
<dbReference type="Pfam" id="PF00430">
    <property type="entry name" value="ATP-synt_B"/>
    <property type="match status" value="1"/>
</dbReference>
<comment type="function">
    <text evidence="1">F(1)F(0) ATP synthase produces ATP from ADP in the presence of a proton or sodium gradient. F-type ATPases consist of two structural domains, F(1) containing the extramembraneous catalytic core and F(0) containing the membrane proton channel, linked together by a central stalk and a peripheral stalk. During catalysis, ATP synthesis in the catalytic domain of F(1) is coupled via a rotary mechanism of the central stalk subunits to proton translocation.</text>
</comment>
<comment type="function">
    <text evidence="1">Component of the F(0) channel, it forms part of the peripheral stalk, linking F(1) to F(0).</text>
</comment>
<comment type="subunit">
    <text evidence="1">F-type ATPases have 2 components, F(1) - the catalytic core - and F(0) - the membrane proton channel. F(1) has five subunits: alpha(3), beta(3), gamma(1), delta(1), epsilon(1). F(0) has four main subunits: a(1), b(1), b'(1) and c(10-14). The alpha and beta chains form an alternating ring which encloses part of the gamma chain. F(1) is attached to F(0) by a central stalk formed by the gamma and epsilon chains, while a peripheral stalk is formed by the delta, b and b' chains.</text>
</comment>
<comment type="subcellular location">
    <subcellularLocation>
        <location evidence="1">Cellular thylakoid membrane</location>
        <topology evidence="1">Single-pass membrane protein</topology>
    </subcellularLocation>
</comment>
<comment type="similarity">
    <text evidence="1">Belongs to the ATPase B chain family.</text>
</comment>
<organism>
    <name type="scientific">Prochlorococcus marinus (strain MIT 9303)</name>
    <dbReference type="NCBI Taxonomy" id="59922"/>
    <lineage>
        <taxon>Bacteria</taxon>
        <taxon>Bacillati</taxon>
        <taxon>Cyanobacteriota</taxon>
        <taxon>Cyanophyceae</taxon>
        <taxon>Synechococcales</taxon>
        <taxon>Prochlorococcaceae</taxon>
        <taxon>Prochlorococcus</taxon>
    </lineage>
</organism>
<name>ATPF_PROM3</name>
<gene>
    <name evidence="1" type="primary">atpF</name>
    <name type="ordered locus">P9303_04811</name>
</gene>
<keyword id="KW-0066">ATP synthesis</keyword>
<keyword id="KW-0138">CF(0)</keyword>
<keyword id="KW-0375">Hydrogen ion transport</keyword>
<keyword id="KW-0406">Ion transport</keyword>
<keyword id="KW-0472">Membrane</keyword>
<keyword id="KW-0793">Thylakoid</keyword>
<keyword id="KW-0812">Transmembrane</keyword>
<keyword id="KW-1133">Transmembrane helix</keyword>
<keyword id="KW-0813">Transport</keyword>
<evidence type="ECO:0000255" key="1">
    <source>
        <dbReference type="HAMAP-Rule" id="MF_01398"/>
    </source>
</evidence>
<proteinExistence type="inferred from homology"/>
<accession>A2C6X3</accession>
<sequence length="172" mass="18696">MISPLFFASEGGFGLNLDLFDANIVNLAIVIFGLYKFLPPFVGGILERRRVAILADLKDAEERLLKATEALAHAKKDLAAAHQKAEQIREDCKLRAEAIRLDSEKRTVEEMARVKQGATADLNAEASRASAQLRREAARMAIENALSALPGKLNADAQAQLVSQSIKNLGEA</sequence>
<feature type="chain" id="PRO_0000368667" description="ATP synthase subunit b">
    <location>
        <begin position="1"/>
        <end position="172"/>
    </location>
</feature>
<feature type="transmembrane region" description="Helical" evidence="1">
    <location>
        <begin position="27"/>
        <end position="47"/>
    </location>
</feature>
<protein>
    <recommendedName>
        <fullName evidence="1">ATP synthase subunit b</fullName>
    </recommendedName>
    <alternativeName>
        <fullName evidence="1">ATP synthase F(0) sector subunit b</fullName>
    </alternativeName>
    <alternativeName>
        <fullName evidence="1">ATPase subunit I</fullName>
    </alternativeName>
    <alternativeName>
        <fullName evidence="1">F-type ATPase subunit b</fullName>
        <shortName evidence="1">F-ATPase subunit b</shortName>
    </alternativeName>
</protein>
<reference key="1">
    <citation type="journal article" date="2007" name="PLoS Genet.">
        <title>Patterns and implications of gene gain and loss in the evolution of Prochlorococcus.</title>
        <authorList>
            <person name="Kettler G.C."/>
            <person name="Martiny A.C."/>
            <person name="Huang K."/>
            <person name="Zucker J."/>
            <person name="Coleman M.L."/>
            <person name="Rodrigue S."/>
            <person name="Chen F."/>
            <person name="Lapidus A."/>
            <person name="Ferriera S."/>
            <person name="Johnson J."/>
            <person name="Steglich C."/>
            <person name="Church G.M."/>
            <person name="Richardson P."/>
            <person name="Chisholm S.W."/>
        </authorList>
    </citation>
    <scope>NUCLEOTIDE SEQUENCE [LARGE SCALE GENOMIC DNA]</scope>
    <source>
        <strain>MIT 9303</strain>
    </source>
</reference>